<keyword id="KW-0025">Alternative splicing</keyword>
<keyword id="KW-0175">Coiled coil</keyword>
<keyword id="KW-0477">Merozoite</keyword>
<keyword id="KW-1185">Reference proteome</keyword>
<name>YPF04_PLAF7</name>
<gene>
    <name type="ORF">PF14_0089</name>
    <name type="ORF">PF3D7_1409200.1</name>
</gene>
<proteinExistence type="evidence at protein level"/>
<comment type="alternative products">
    <event type="alternative splicing"/>
    <isoform>
        <id>Q8IM04-1</id>
        <name>1</name>
        <sequence type="displayed"/>
    </isoform>
    <isoform>
        <id>Q8IM04-2</id>
        <name>2</name>
        <sequence type="described" ref="VSP_061283"/>
    </isoform>
</comment>
<comment type="biotechnology">
    <text evidence="3">Possible candidate for an effective malaria vaccine as determined by epitope response in sera.</text>
</comment>
<accession>Q8IM04</accession>
<accession>A0A144A197</accession>
<accession>A0A144A1W9</accession>
<dbReference type="EMBL" id="LN999946">
    <property type="protein sequence ID" value="CZT99799.1"/>
    <property type="molecule type" value="Genomic_DNA"/>
</dbReference>
<dbReference type="EMBL" id="LN999946">
    <property type="protein sequence ID" value="CZT99800.1"/>
    <property type="molecule type" value="Genomic_DNA"/>
</dbReference>
<dbReference type="RefSeq" id="XP_001348262.2">
    <molecule id="Q8IM04-1"/>
    <property type="nucleotide sequence ID" value="XM_001348226.2"/>
</dbReference>
<dbReference type="SMR" id="Q8IM04"/>
<dbReference type="PaxDb" id="5833-PF14_0089.1"/>
<dbReference type="EnsemblProtists" id="CZT99799">
    <molecule id="Q8IM04-2"/>
    <property type="protein sequence ID" value="CZT99799"/>
    <property type="gene ID" value="PF3D7_1409200.2"/>
</dbReference>
<dbReference type="EnsemblProtists" id="CZT99800">
    <molecule id="Q8IM04-1"/>
    <property type="protein sequence ID" value="CZT99800"/>
    <property type="gene ID" value="PF3D7_1409200.1"/>
</dbReference>
<dbReference type="GeneID" id="811670"/>
<dbReference type="KEGG" id="pfa:PF3D7_1409200.1"/>
<dbReference type="VEuPathDB" id="PlasmoDB:PF3D7_1409200"/>
<dbReference type="HOGENOM" id="CLU_1457232_0_0_1"/>
<dbReference type="InParanoid" id="Q8IM04"/>
<dbReference type="OMA" id="EKYSCAV"/>
<dbReference type="OrthoDB" id="378381at2759"/>
<dbReference type="PhylomeDB" id="Q8IM04"/>
<dbReference type="Proteomes" id="UP000001450">
    <property type="component" value="Chromosome 14"/>
</dbReference>
<sequence length="198" mass="23555">MIKSKFFCKSLKFFMHPYSKIKNEKSFIDLNFIKGYSNFIKKKCVPYDKKKYIFCNKNRLISNVGNKINKKESEEQYDSDDDNDKLVLNDDEDDEKKQVHINNKTEATNITNINKNIENIKNDMSNLNNMNDSNQKIKMKNKGKYDSDVIIMYDHFFQLPQNFLSSKLSEEEIEYINTGIYNPDFDNYINNIVMKKKK</sequence>
<feature type="chain" id="PRO_0000361764" description="Uncharacterized protein PF3D7_1409200">
    <location>
        <begin position="1"/>
        <end position="198"/>
    </location>
</feature>
<feature type="region of interest" description="Disordered" evidence="2">
    <location>
        <begin position="72"/>
        <end position="95"/>
    </location>
</feature>
<feature type="coiled-coil region" evidence="1">
    <location>
        <begin position="106"/>
        <end position="136"/>
    </location>
</feature>
<feature type="compositionally biased region" description="Acidic residues" evidence="2">
    <location>
        <begin position="75"/>
        <end position="94"/>
    </location>
</feature>
<feature type="splice variant" id="VSP_061283" description="In isoform 2." evidence="4">
    <original>SKFFCKSLKFFMH</original>
    <variation>N</variation>
    <location>
        <begin position="4"/>
        <end position="16"/>
    </location>
</feature>
<reference key="1">
    <citation type="journal article" date="2002" name="Nature">
        <title>Genome sequence of the human malaria parasite Plasmodium falciparum.</title>
        <authorList>
            <person name="Gardner M.J."/>
            <person name="Hall N."/>
            <person name="Fung E."/>
            <person name="White O."/>
            <person name="Berriman M."/>
            <person name="Hyman R.W."/>
            <person name="Carlton J.M."/>
            <person name="Pain A."/>
            <person name="Nelson K.E."/>
            <person name="Bowman S."/>
            <person name="Paulsen I.T."/>
            <person name="James K.D."/>
            <person name="Eisen J.A."/>
            <person name="Rutherford K.M."/>
            <person name="Salzberg S.L."/>
            <person name="Craig A."/>
            <person name="Kyes S."/>
            <person name="Chan M.-S."/>
            <person name="Nene V."/>
            <person name="Shallom S.J."/>
            <person name="Suh B."/>
            <person name="Peterson J."/>
            <person name="Angiuoli S."/>
            <person name="Pertea M."/>
            <person name="Allen J."/>
            <person name="Selengut J."/>
            <person name="Haft D."/>
            <person name="Mather M.W."/>
            <person name="Vaidya A.B."/>
            <person name="Martin D.M.A."/>
            <person name="Fairlamb A.H."/>
            <person name="Fraunholz M.J."/>
            <person name="Roos D.S."/>
            <person name="Ralph S.A."/>
            <person name="McFadden G.I."/>
            <person name="Cummings L.M."/>
            <person name="Subramanian G.M."/>
            <person name="Mungall C."/>
            <person name="Venter J.C."/>
            <person name="Carucci D.J."/>
            <person name="Hoffman S.L."/>
            <person name="Newbold C."/>
            <person name="Davis R.W."/>
            <person name="Fraser C.M."/>
            <person name="Barrell B.G."/>
        </authorList>
    </citation>
    <scope>NUCLEOTIDE SEQUENCE [LARGE SCALE GENOMIC DNA]</scope>
    <source>
        <strain>3D7</strain>
    </source>
</reference>
<reference evidence="4" key="2">
    <citation type="journal article" date="2007" name="PLoS ONE">
        <title>Rapid identification of malaria vaccine candidates based on alpha-helical coiled coil protein motif.</title>
        <authorList>
            <person name="Villard V."/>
            <person name="Agak G.W."/>
            <person name="Frank G."/>
            <person name="Jafarshad A."/>
            <person name="Servis C."/>
            <person name="Nebie I."/>
            <person name="Sirima S.B."/>
            <person name="Felger I."/>
            <person name="Arevalo-Herrera M."/>
            <person name="Herrera S."/>
            <person name="Heitz F."/>
            <person name="Baecker V."/>
            <person name="Druilhe P."/>
            <person name="Kajava A.V."/>
            <person name="Corradin G."/>
        </authorList>
    </citation>
    <scope>SYNTHESIS OF 109-135</scope>
    <scope>POSSIBLE CANDIDATE MALARIA EPITOPE</scope>
</reference>
<organism>
    <name type="scientific">Plasmodium falciparum (isolate 3D7)</name>
    <dbReference type="NCBI Taxonomy" id="36329"/>
    <lineage>
        <taxon>Eukaryota</taxon>
        <taxon>Sar</taxon>
        <taxon>Alveolata</taxon>
        <taxon>Apicomplexa</taxon>
        <taxon>Aconoidasida</taxon>
        <taxon>Haemosporida</taxon>
        <taxon>Plasmodiidae</taxon>
        <taxon>Plasmodium</taxon>
        <taxon>Plasmodium (Laverania)</taxon>
    </lineage>
</organism>
<evidence type="ECO:0000255" key="1"/>
<evidence type="ECO:0000256" key="2">
    <source>
        <dbReference type="SAM" id="MobiDB-lite"/>
    </source>
</evidence>
<evidence type="ECO:0000269" key="3">
    <source>
    </source>
</evidence>
<evidence type="ECO:0000305" key="4"/>
<protein>
    <recommendedName>
        <fullName>Uncharacterized protein PF3D7_1409200</fullName>
    </recommendedName>
</protein>